<feature type="chain" id="PRO_0000242088" description="Arginine--tRNA ligase">
    <location>
        <begin position="1"/>
        <end position="577"/>
    </location>
</feature>
<feature type="short sequence motif" description="'HIGH' region">
    <location>
        <begin position="122"/>
        <end position="132"/>
    </location>
</feature>
<name>SYR_SALCH</name>
<organism>
    <name type="scientific">Salmonella choleraesuis (strain SC-B67)</name>
    <dbReference type="NCBI Taxonomy" id="321314"/>
    <lineage>
        <taxon>Bacteria</taxon>
        <taxon>Pseudomonadati</taxon>
        <taxon>Pseudomonadota</taxon>
        <taxon>Gammaproteobacteria</taxon>
        <taxon>Enterobacterales</taxon>
        <taxon>Enterobacteriaceae</taxon>
        <taxon>Salmonella</taxon>
    </lineage>
</organism>
<dbReference type="EC" id="6.1.1.19" evidence="1"/>
<dbReference type="EMBL" id="AE017220">
    <property type="protein sequence ID" value="AAX65822.1"/>
    <property type="molecule type" value="Genomic_DNA"/>
</dbReference>
<dbReference type="RefSeq" id="WP_001025358.1">
    <property type="nucleotide sequence ID" value="NC_006905.1"/>
</dbReference>
<dbReference type="SMR" id="Q57N89"/>
<dbReference type="KEGG" id="sec:SCH_1916"/>
<dbReference type="HOGENOM" id="CLU_006406_5_1_6"/>
<dbReference type="Proteomes" id="UP000000538">
    <property type="component" value="Chromosome"/>
</dbReference>
<dbReference type="GO" id="GO:0005737">
    <property type="term" value="C:cytoplasm"/>
    <property type="evidence" value="ECO:0007669"/>
    <property type="project" value="UniProtKB-SubCell"/>
</dbReference>
<dbReference type="GO" id="GO:0004814">
    <property type="term" value="F:arginine-tRNA ligase activity"/>
    <property type="evidence" value="ECO:0007669"/>
    <property type="project" value="UniProtKB-UniRule"/>
</dbReference>
<dbReference type="GO" id="GO:0005524">
    <property type="term" value="F:ATP binding"/>
    <property type="evidence" value="ECO:0007669"/>
    <property type="project" value="UniProtKB-UniRule"/>
</dbReference>
<dbReference type="GO" id="GO:0006420">
    <property type="term" value="P:arginyl-tRNA aminoacylation"/>
    <property type="evidence" value="ECO:0007669"/>
    <property type="project" value="UniProtKB-UniRule"/>
</dbReference>
<dbReference type="CDD" id="cd07956">
    <property type="entry name" value="Anticodon_Ia_Arg"/>
    <property type="match status" value="1"/>
</dbReference>
<dbReference type="CDD" id="cd00671">
    <property type="entry name" value="ArgRS_core"/>
    <property type="match status" value="1"/>
</dbReference>
<dbReference type="FunFam" id="1.10.730.10:FF:000001">
    <property type="entry name" value="Arginine--tRNA ligase"/>
    <property type="match status" value="1"/>
</dbReference>
<dbReference type="FunFam" id="3.30.1360.70:FF:000001">
    <property type="entry name" value="Arginine--tRNA ligase"/>
    <property type="match status" value="1"/>
</dbReference>
<dbReference type="FunFam" id="3.40.50.620:FF:000030">
    <property type="entry name" value="Arginine--tRNA ligase"/>
    <property type="match status" value="1"/>
</dbReference>
<dbReference type="Gene3D" id="3.30.1360.70">
    <property type="entry name" value="Arginyl tRNA synthetase N-terminal domain"/>
    <property type="match status" value="1"/>
</dbReference>
<dbReference type="Gene3D" id="3.40.50.620">
    <property type="entry name" value="HUPs"/>
    <property type="match status" value="1"/>
</dbReference>
<dbReference type="Gene3D" id="1.10.730.10">
    <property type="entry name" value="Isoleucyl-tRNA Synthetase, Domain 1"/>
    <property type="match status" value="1"/>
</dbReference>
<dbReference type="HAMAP" id="MF_00123">
    <property type="entry name" value="Arg_tRNA_synth"/>
    <property type="match status" value="1"/>
</dbReference>
<dbReference type="InterPro" id="IPR001412">
    <property type="entry name" value="aa-tRNA-synth_I_CS"/>
</dbReference>
<dbReference type="InterPro" id="IPR001278">
    <property type="entry name" value="Arg-tRNA-ligase"/>
</dbReference>
<dbReference type="InterPro" id="IPR005148">
    <property type="entry name" value="Arg-tRNA-synth_N"/>
</dbReference>
<dbReference type="InterPro" id="IPR036695">
    <property type="entry name" value="Arg-tRNA-synth_N_sf"/>
</dbReference>
<dbReference type="InterPro" id="IPR035684">
    <property type="entry name" value="ArgRS_core"/>
</dbReference>
<dbReference type="InterPro" id="IPR008909">
    <property type="entry name" value="DALR_anticod-bd"/>
</dbReference>
<dbReference type="InterPro" id="IPR014729">
    <property type="entry name" value="Rossmann-like_a/b/a_fold"/>
</dbReference>
<dbReference type="InterPro" id="IPR009080">
    <property type="entry name" value="tRNAsynth_Ia_anticodon-bd"/>
</dbReference>
<dbReference type="NCBIfam" id="TIGR00456">
    <property type="entry name" value="argS"/>
    <property type="match status" value="1"/>
</dbReference>
<dbReference type="PANTHER" id="PTHR11956:SF5">
    <property type="entry name" value="ARGININE--TRNA LIGASE, CYTOPLASMIC"/>
    <property type="match status" value="1"/>
</dbReference>
<dbReference type="PANTHER" id="PTHR11956">
    <property type="entry name" value="ARGINYL-TRNA SYNTHETASE"/>
    <property type="match status" value="1"/>
</dbReference>
<dbReference type="Pfam" id="PF03485">
    <property type="entry name" value="Arg_tRNA_synt_N"/>
    <property type="match status" value="1"/>
</dbReference>
<dbReference type="Pfam" id="PF05746">
    <property type="entry name" value="DALR_1"/>
    <property type="match status" value="1"/>
</dbReference>
<dbReference type="Pfam" id="PF00750">
    <property type="entry name" value="tRNA-synt_1d"/>
    <property type="match status" value="1"/>
</dbReference>
<dbReference type="PRINTS" id="PR01038">
    <property type="entry name" value="TRNASYNTHARG"/>
</dbReference>
<dbReference type="SMART" id="SM01016">
    <property type="entry name" value="Arg_tRNA_synt_N"/>
    <property type="match status" value="1"/>
</dbReference>
<dbReference type="SMART" id="SM00836">
    <property type="entry name" value="DALR_1"/>
    <property type="match status" value="1"/>
</dbReference>
<dbReference type="SUPFAM" id="SSF47323">
    <property type="entry name" value="Anticodon-binding domain of a subclass of class I aminoacyl-tRNA synthetases"/>
    <property type="match status" value="1"/>
</dbReference>
<dbReference type="SUPFAM" id="SSF55190">
    <property type="entry name" value="Arginyl-tRNA synthetase (ArgRS), N-terminal 'additional' domain"/>
    <property type="match status" value="1"/>
</dbReference>
<dbReference type="SUPFAM" id="SSF52374">
    <property type="entry name" value="Nucleotidylyl transferase"/>
    <property type="match status" value="1"/>
</dbReference>
<dbReference type="PROSITE" id="PS00178">
    <property type="entry name" value="AA_TRNA_LIGASE_I"/>
    <property type="match status" value="1"/>
</dbReference>
<comment type="catalytic activity">
    <reaction evidence="1">
        <text>tRNA(Arg) + L-arginine + ATP = L-arginyl-tRNA(Arg) + AMP + diphosphate</text>
        <dbReference type="Rhea" id="RHEA:20301"/>
        <dbReference type="Rhea" id="RHEA-COMP:9658"/>
        <dbReference type="Rhea" id="RHEA-COMP:9673"/>
        <dbReference type="ChEBI" id="CHEBI:30616"/>
        <dbReference type="ChEBI" id="CHEBI:32682"/>
        <dbReference type="ChEBI" id="CHEBI:33019"/>
        <dbReference type="ChEBI" id="CHEBI:78442"/>
        <dbReference type="ChEBI" id="CHEBI:78513"/>
        <dbReference type="ChEBI" id="CHEBI:456215"/>
        <dbReference type="EC" id="6.1.1.19"/>
    </reaction>
</comment>
<comment type="subunit">
    <text evidence="1">Monomer.</text>
</comment>
<comment type="subcellular location">
    <subcellularLocation>
        <location evidence="1">Cytoplasm</location>
    </subcellularLocation>
</comment>
<comment type="similarity">
    <text evidence="1">Belongs to the class-I aminoacyl-tRNA synthetase family.</text>
</comment>
<evidence type="ECO:0000255" key="1">
    <source>
        <dbReference type="HAMAP-Rule" id="MF_00123"/>
    </source>
</evidence>
<accession>Q57N89</accession>
<sequence length="577" mass="64246">MNIQALLSEKVSQAMIAAGAPADCEPQVRQSAKVQFGDYQANGMMAVAKKLGMAPRQLAEQVLTHLDLSGIASKVEIAGPGFINIFLEPAFLAEQVQQALASDRLGVSQPTRQTIVVDYSAPNVAKEMHVGHLRSTIIGDAAVRTLEFLGHHVIRANHVGDWGTQFGMLIAWLEKQQQENAGDMALADLEGFYRDAKKHYDEDEAFAERARNYVVKLQSGDAYFREMWRKLVDITMTQNQITYDRLNVTLTRDDVMGESLYNPMLPGIVADLKAKGLAVESEGATVVFLDEFKNKEGDPMGVIIQKKDGGYLYTTTDIACAKYRYETLHADRVLYYIDSRQHQHLMQAWTIVRKAGYVPDSVPLEHHMFGMMLGKDGKPFKTRAGGTVKLADLLDEALERARRLVAEKNPDMPADELEKLANAVGIGAVKYADLSKNRTTDYIFDWDNMLAFEGNTAPYMQYAYTRVLSVFRKADIDEQALASAPVIISEDREAQLAARLLQFEETLTVVAREGTPHVMCAYLYDVAGLFSGFYEHCPILSAENDAVRNSRLKLAQLTAKTLKLGLDTLGIETVERM</sequence>
<protein>
    <recommendedName>
        <fullName evidence="1">Arginine--tRNA ligase</fullName>
        <ecNumber evidence="1">6.1.1.19</ecNumber>
    </recommendedName>
    <alternativeName>
        <fullName evidence="1">Arginyl-tRNA synthetase</fullName>
        <shortName evidence="1">ArgRS</shortName>
    </alternativeName>
</protein>
<keyword id="KW-0030">Aminoacyl-tRNA synthetase</keyword>
<keyword id="KW-0067">ATP-binding</keyword>
<keyword id="KW-0963">Cytoplasm</keyword>
<keyword id="KW-0436">Ligase</keyword>
<keyword id="KW-0547">Nucleotide-binding</keyword>
<keyword id="KW-0648">Protein biosynthesis</keyword>
<gene>
    <name evidence="1" type="primary">argS</name>
    <name type="ordered locus">SCH_1916</name>
</gene>
<reference key="1">
    <citation type="journal article" date="2005" name="Nucleic Acids Res.">
        <title>The genome sequence of Salmonella enterica serovar Choleraesuis, a highly invasive and resistant zoonotic pathogen.</title>
        <authorList>
            <person name="Chiu C.-H."/>
            <person name="Tang P."/>
            <person name="Chu C."/>
            <person name="Hu S."/>
            <person name="Bao Q."/>
            <person name="Yu J."/>
            <person name="Chou Y.-Y."/>
            <person name="Wang H.-S."/>
            <person name="Lee Y.-S."/>
        </authorList>
    </citation>
    <scope>NUCLEOTIDE SEQUENCE [LARGE SCALE GENOMIC DNA]</scope>
    <source>
        <strain>SC-B67</strain>
    </source>
</reference>
<proteinExistence type="inferred from homology"/>